<organism>
    <name type="scientific">Pseudoalteromonas translucida (strain TAC 125)</name>
    <dbReference type="NCBI Taxonomy" id="326442"/>
    <lineage>
        <taxon>Bacteria</taxon>
        <taxon>Pseudomonadati</taxon>
        <taxon>Pseudomonadota</taxon>
        <taxon>Gammaproteobacteria</taxon>
        <taxon>Alteromonadales</taxon>
        <taxon>Pseudoalteromonadaceae</taxon>
        <taxon>Pseudoalteromonas</taxon>
    </lineage>
</organism>
<reference key="1">
    <citation type="journal article" date="2005" name="Genome Res.">
        <title>Coping with cold: the genome of the versatile marine Antarctica bacterium Pseudoalteromonas haloplanktis TAC125.</title>
        <authorList>
            <person name="Medigue C."/>
            <person name="Krin E."/>
            <person name="Pascal G."/>
            <person name="Barbe V."/>
            <person name="Bernsel A."/>
            <person name="Bertin P.N."/>
            <person name="Cheung F."/>
            <person name="Cruveiller S."/>
            <person name="D'Amico S."/>
            <person name="Duilio A."/>
            <person name="Fang G."/>
            <person name="Feller G."/>
            <person name="Ho C."/>
            <person name="Mangenot S."/>
            <person name="Marino G."/>
            <person name="Nilsson J."/>
            <person name="Parrilli E."/>
            <person name="Rocha E.P.C."/>
            <person name="Rouy Z."/>
            <person name="Sekowska A."/>
            <person name="Tutino M.L."/>
            <person name="Vallenet D."/>
            <person name="von Heijne G."/>
            <person name="Danchin A."/>
        </authorList>
    </citation>
    <scope>NUCLEOTIDE SEQUENCE [LARGE SCALE GENOMIC DNA]</scope>
    <source>
        <strain>TAC 125</strain>
    </source>
</reference>
<dbReference type="EMBL" id="CR954246">
    <property type="protein sequence ID" value="CAI86941.1"/>
    <property type="molecule type" value="Genomic_DNA"/>
</dbReference>
<dbReference type="SMR" id="Q3IJ16"/>
<dbReference type="STRING" id="326442.PSHAa1871"/>
<dbReference type="KEGG" id="pha:PSHAa1871"/>
<dbReference type="PATRIC" id="fig|326442.8.peg.1816"/>
<dbReference type="eggNOG" id="COG0823">
    <property type="taxonomic scope" value="Bacteria"/>
</dbReference>
<dbReference type="HOGENOM" id="CLU_047123_0_0_6"/>
<dbReference type="BioCyc" id="PHAL326442:PSHA_RS09210-MONOMER"/>
<dbReference type="Proteomes" id="UP000006843">
    <property type="component" value="Chromosome I"/>
</dbReference>
<dbReference type="GO" id="GO:0042597">
    <property type="term" value="C:periplasmic space"/>
    <property type="evidence" value="ECO:0007669"/>
    <property type="project" value="UniProtKB-SubCell"/>
</dbReference>
<dbReference type="GO" id="GO:0051301">
    <property type="term" value="P:cell division"/>
    <property type="evidence" value="ECO:0007669"/>
    <property type="project" value="UniProtKB-UniRule"/>
</dbReference>
<dbReference type="GO" id="GO:0017038">
    <property type="term" value="P:protein import"/>
    <property type="evidence" value="ECO:0007669"/>
    <property type="project" value="InterPro"/>
</dbReference>
<dbReference type="Gene3D" id="2.120.10.30">
    <property type="entry name" value="TolB, C-terminal domain"/>
    <property type="match status" value="1"/>
</dbReference>
<dbReference type="Gene3D" id="3.40.50.10070">
    <property type="entry name" value="TolB, N-terminal domain"/>
    <property type="match status" value="1"/>
</dbReference>
<dbReference type="HAMAP" id="MF_00671">
    <property type="entry name" value="TolB"/>
    <property type="match status" value="1"/>
</dbReference>
<dbReference type="InterPro" id="IPR011042">
    <property type="entry name" value="6-blade_b-propeller_TolB-like"/>
</dbReference>
<dbReference type="InterPro" id="IPR011659">
    <property type="entry name" value="PD40"/>
</dbReference>
<dbReference type="InterPro" id="IPR014167">
    <property type="entry name" value="Tol-Pal_TolB"/>
</dbReference>
<dbReference type="InterPro" id="IPR007195">
    <property type="entry name" value="TolB_N"/>
</dbReference>
<dbReference type="NCBIfam" id="TIGR02800">
    <property type="entry name" value="propeller_TolB"/>
    <property type="match status" value="1"/>
</dbReference>
<dbReference type="PANTHER" id="PTHR36842:SF1">
    <property type="entry name" value="PROTEIN TOLB"/>
    <property type="match status" value="1"/>
</dbReference>
<dbReference type="PANTHER" id="PTHR36842">
    <property type="entry name" value="PROTEIN TOLB HOMOLOG"/>
    <property type="match status" value="1"/>
</dbReference>
<dbReference type="Pfam" id="PF07676">
    <property type="entry name" value="PD40"/>
    <property type="match status" value="4"/>
</dbReference>
<dbReference type="Pfam" id="PF04052">
    <property type="entry name" value="TolB_N"/>
    <property type="match status" value="1"/>
</dbReference>
<dbReference type="SUPFAM" id="SSF52964">
    <property type="entry name" value="TolB, N-terminal domain"/>
    <property type="match status" value="1"/>
</dbReference>
<dbReference type="SUPFAM" id="SSF69304">
    <property type="entry name" value="Tricorn protease N-terminal domain"/>
    <property type="match status" value="1"/>
</dbReference>
<name>TOLB_PSET1</name>
<proteinExistence type="inferred from homology"/>
<gene>
    <name evidence="1" type="primary">tolB</name>
    <name type="ordered locus">PSHAa1871</name>
</gene>
<evidence type="ECO:0000255" key="1">
    <source>
        <dbReference type="HAMAP-Rule" id="MF_00671"/>
    </source>
</evidence>
<protein>
    <recommendedName>
        <fullName evidence="1">Tol-Pal system protein TolB</fullName>
    </recommendedName>
</protein>
<keyword id="KW-0131">Cell cycle</keyword>
<keyword id="KW-0132">Cell division</keyword>
<keyword id="KW-0574">Periplasm</keyword>
<keyword id="KW-1185">Reference proteome</keyword>
<keyword id="KW-0732">Signal</keyword>
<accession>Q3IJ16</accession>
<sequence>MFNKVKVACLILLLGFQGVANAALEIVITEGIDGARPIAIVPFKYQGIGPIPQKISEVIAADLMRSGKFKPVDVAQMPQQPSKDSDINYASWVNKGVEAILVGEVEQQSNGRYLVRYELVDVIRGQITGGQTQMMTNGKLIKNQDHILEARESIISDTGFRRYSHRISDVIYEKLTGEKGAFLTKIAYVIVRDNDDRPYQLVVSDYDGFNEQVLLRSKEPLMSPAWSPDGTKLAYVTFENRQSQIYIQDLYSGKRELVTSYPGINGAPQFSPDGKKLLLVLSKDKTGATEVYLLDLVTRKETRLTRHRSIDTEPSWHPNGQDIVFTSERGGNAQIYKLNLKTGRTQRLSFDGDMNLAGSITPDGKELVMVNRTNGQYHLAKKELATGAFQVLTRTRLDESPSIAPNGSMIIYSTLHNNKQVLALVSMDGRFKARLPVLDGQVKAPAWSPYLQ</sequence>
<feature type="signal peptide" evidence="1">
    <location>
        <begin position="1"/>
        <end position="22"/>
    </location>
</feature>
<feature type="chain" id="PRO_0000259069" description="Tol-Pal system protein TolB" evidence="1">
    <location>
        <begin position="23"/>
        <end position="452"/>
    </location>
</feature>
<comment type="function">
    <text evidence="1">Part of the Tol-Pal system, which plays a role in outer membrane invagination during cell division and is important for maintaining outer membrane integrity.</text>
</comment>
<comment type="subunit">
    <text evidence="1">The Tol-Pal system is composed of five core proteins: the inner membrane proteins TolA, TolQ and TolR, the periplasmic protein TolB and the outer membrane protein Pal. They form a network linking the inner and outer membranes and the peptidoglycan layer.</text>
</comment>
<comment type="subcellular location">
    <subcellularLocation>
        <location evidence="1">Periplasm</location>
    </subcellularLocation>
</comment>
<comment type="similarity">
    <text evidence="1">Belongs to the TolB family.</text>
</comment>